<accession>A9G9R0</accession>
<proteinExistence type="inferred from homology"/>
<gene>
    <name evidence="1" type="primary">miaA</name>
    <name type="ordered locus">sce9051</name>
</gene>
<evidence type="ECO:0000255" key="1">
    <source>
        <dbReference type="HAMAP-Rule" id="MF_00185"/>
    </source>
</evidence>
<dbReference type="EC" id="2.5.1.75" evidence="1"/>
<dbReference type="EMBL" id="AM746676">
    <property type="protein sequence ID" value="CAN99223.1"/>
    <property type="molecule type" value="Genomic_DNA"/>
</dbReference>
<dbReference type="RefSeq" id="WP_012241662.1">
    <property type="nucleotide sequence ID" value="NC_010162.1"/>
</dbReference>
<dbReference type="SMR" id="A9G9R0"/>
<dbReference type="STRING" id="448385.sce9051"/>
<dbReference type="KEGG" id="scl:sce9051"/>
<dbReference type="eggNOG" id="COG0324">
    <property type="taxonomic scope" value="Bacteria"/>
</dbReference>
<dbReference type="HOGENOM" id="CLU_032616_0_1_7"/>
<dbReference type="OrthoDB" id="9776390at2"/>
<dbReference type="BioCyc" id="SCEL448385:SCE_RS46360-MONOMER"/>
<dbReference type="Proteomes" id="UP000002139">
    <property type="component" value="Chromosome"/>
</dbReference>
<dbReference type="GO" id="GO:0005524">
    <property type="term" value="F:ATP binding"/>
    <property type="evidence" value="ECO:0007669"/>
    <property type="project" value="UniProtKB-UniRule"/>
</dbReference>
<dbReference type="GO" id="GO:0052381">
    <property type="term" value="F:tRNA dimethylallyltransferase activity"/>
    <property type="evidence" value="ECO:0007669"/>
    <property type="project" value="UniProtKB-UniRule"/>
</dbReference>
<dbReference type="GO" id="GO:0006400">
    <property type="term" value="P:tRNA modification"/>
    <property type="evidence" value="ECO:0007669"/>
    <property type="project" value="TreeGrafter"/>
</dbReference>
<dbReference type="FunFam" id="1.10.20.140:FF:000001">
    <property type="entry name" value="tRNA dimethylallyltransferase"/>
    <property type="match status" value="1"/>
</dbReference>
<dbReference type="Gene3D" id="1.10.20.140">
    <property type="match status" value="1"/>
</dbReference>
<dbReference type="Gene3D" id="3.40.50.300">
    <property type="entry name" value="P-loop containing nucleotide triphosphate hydrolases"/>
    <property type="match status" value="1"/>
</dbReference>
<dbReference type="HAMAP" id="MF_00185">
    <property type="entry name" value="IPP_trans"/>
    <property type="match status" value="1"/>
</dbReference>
<dbReference type="InterPro" id="IPR039657">
    <property type="entry name" value="Dimethylallyltransferase"/>
</dbReference>
<dbReference type="InterPro" id="IPR018022">
    <property type="entry name" value="IPT"/>
</dbReference>
<dbReference type="InterPro" id="IPR027417">
    <property type="entry name" value="P-loop_NTPase"/>
</dbReference>
<dbReference type="NCBIfam" id="TIGR00174">
    <property type="entry name" value="miaA"/>
    <property type="match status" value="1"/>
</dbReference>
<dbReference type="PANTHER" id="PTHR11088">
    <property type="entry name" value="TRNA DIMETHYLALLYLTRANSFERASE"/>
    <property type="match status" value="1"/>
</dbReference>
<dbReference type="PANTHER" id="PTHR11088:SF60">
    <property type="entry name" value="TRNA DIMETHYLALLYLTRANSFERASE"/>
    <property type="match status" value="1"/>
</dbReference>
<dbReference type="Pfam" id="PF01715">
    <property type="entry name" value="IPPT"/>
    <property type="match status" value="1"/>
</dbReference>
<dbReference type="SUPFAM" id="SSF52540">
    <property type="entry name" value="P-loop containing nucleoside triphosphate hydrolases"/>
    <property type="match status" value="1"/>
</dbReference>
<protein>
    <recommendedName>
        <fullName evidence="1">tRNA dimethylallyltransferase</fullName>
        <ecNumber evidence="1">2.5.1.75</ecNumber>
    </recommendedName>
    <alternativeName>
        <fullName evidence="1">Dimethylallyl diphosphate:tRNA dimethylallyltransferase</fullName>
        <shortName evidence="1">DMAPP:tRNA dimethylallyltransferase</shortName>
        <shortName evidence="1">DMATase</shortName>
    </alternativeName>
    <alternativeName>
        <fullName evidence="1">Isopentenyl-diphosphate:tRNA isopentenyltransferase</fullName>
        <shortName evidence="1">IPP transferase</shortName>
        <shortName evidence="1">IPPT</shortName>
        <shortName evidence="1">IPTase</shortName>
    </alternativeName>
</protein>
<sequence length="314" mass="34082">MSEAALDLAPDAGAAAPPSWETIAPPAPGELLVVVGPTASGKTELAIRLAERFGGEVVSADSVQIYREFDLGSGKPTPAERARAAHHLVDAVDPLQAIDAQRFAELAEAAIDDIRGRGRVPVVCGGTFLWVKALVLGLSPAPPADPEARARHRAIADAEGRAALHARLAAVDPESAARLAPNDLVRVSRALEIYERSGRTQSAWHAEHGFRERRHAARLLAVHRDRAELDHRIEARVAGWLEQGWVDEVRSLLSRGYGDARAMGSVGYRQVREHLEGRLPADELAPAIVRATRTFVRRQRTWLRDQAVAYVALP</sequence>
<organism>
    <name type="scientific">Sorangium cellulosum (strain So ce56)</name>
    <name type="common">Polyangium cellulosum (strain So ce56)</name>
    <dbReference type="NCBI Taxonomy" id="448385"/>
    <lineage>
        <taxon>Bacteria</taxon>
        <taxon>Pseudomonadati</taxon>
        <taxon>Myxococcota</taxon>
        <taxon>Polyangia</taxon>
        <taxon>Polyangiales</taxon>
        <taxon>Polyangiaceae</taxon>
        <taxon>Sorangium</taxon>
    </lineage>
</organism>
<keyword id="KW-0067">ATP-binding</keyword>
<keyword id="KW-0460">Magnesium</keyword>
<keyword id="KW-0547">Nucleotide-binding</keyword>
<keyword id="KW-1185">Reference proteome</keyword>
<keyword id="KW-0808">Transferase</keyword>
<keyword id="KW-0819">tRNA processing</keyword>
<name>MIAA_SORC5</name>
<comment type="function">
    <text evidence="1">Catalyzes the transfer of a dimethylallyl group onto the adenine at position 37 in tRNAs that read codons beginning with uridine, leading to the formation of N6-(dimethylallyl)adenosine (i(6)A).</text>
</comment>
<comment type="catalytic activity">
    <reaction evidence="1">
        <text>adenosine(37) in tRNA + dimethylallyl diphosphate = N(6)-dimethylallyladenosine(37) in tRNA + diphosphate</text>
        <dbReference type="Rhea" id="RHEA:26482"/>
        <dbReference type="Rhea" id="RHEA-COMP:10162"/>
        <dbReference type="Rhea" id="RHEA-COMP:10375"/>
        <dbReference type="ChEBI" id="CHEBI:33019"/>
        <dbReference type="ChEBI" id="CHEBI:57623"/>
        <dbReference type="ChEBI" id="CHEBI:74411"/>
        <dbReference type="ChEBI" id="CHEBI:74415"/>
        <dbReference type="EC" id="2.5.1.75"/>
    </reaction>
</comment>
<comment type="cofactor">
    <cofactor evidence="1">
        <name>Mg(2+)</name>
        <dbReference type="ChEBI" id="CHEBI:18420"/>
    </cofactor>
</comment>
<comment type="subunit">
    <text evidence="1">Monomer.</text>
</comment>
<comment type="similarity">
    <text evidence="1">Belongs to the IPP transferase family.</text>
</comment>
<feature type="chain" id="PRO_0000377328" description="tRNA dimethylallyltransferase">
    <location>
        <begin position="1"/>
        <end position="314"/>
    </location>
</feature>
<feature type="region of interest" description="Interaction with substrate tRNA" evidence="1">
    <location>
        <begin position="61"/>
        <end position="64"/>
    </location>
</feature>
<feature type="binding site" evidence="1">
    <location>
        <begin position="36"/>
        <end position="43"/>
    </location>
    <ligand>
        <name>ATP</name>
        <dbReference type="ChEBI" id="CHEBI:30616"/>
    </ligand>
</feature>
<feature type="binding site" evidence="1">
    <location>
        <begin position="38"/>
        <end position="43"/>
    </location>
    <ligand>
        <name>substrate</name>
    </ligand>
</feature>
<feature type="site" description="Interaction with substrate tRNA" evidence="1">
    <location>
        <position position="127"/>
    </location>
</feature>
<feature type="site" description="Interaction with substrate tRNA" evidence="1">
    <location>
        <position position="149"/>
    </location>
</feature>
<reference key="1">
    <citation type="journal article" date="2007" name="Nat. Biotechnol.">
        <title>Complete genome sequence of the myxobacterium Sorangium cellulosum.</title>
        <authorList>
            <person name="Schneiker S."/>
            <person name="Perlova O."/>
            <person name="Kaiser O."/>
            <person name="Gerth K."/>
            <person name="Alici A."/>
            <person name="Altmeyer M.O."/>
            <person name="Bartels D."/>
            <person name="Bekel T."/>
            <person name="Beyer S."/>
            <person name="Bode E."/>
            <person name="Bode H.B."/>
            <person name="Bolten C.J."/>
            <person name="Choudhuri J.V."/>
            <person name="Doss S."/>
            <person name="Elnakady Y.A."/>
            <person name="Frank B."/>
            <person name="Gaigalat L."/>
            <person name="Goesmann A."/>
            <person name="Groeger C."/>
            <person name="Gross F."/>
            <person name="Jelsbak L."/>
            <person name="Jelsbak L."/>
            <person name="Kalinowski J."/>
            <person name="Kegler C."/>
            <person name="Knauber T."/>
            <person name="Konietzny S."/>
            <person name="Kopp M."/>
            <person name="Krause L."/>
            <person name="Krug D."/>
            <person name="Linke B."/>
            <person name="Mahmud T."/>
            <person name="Martinez-Arias R."/>
            <person name="McHardy A.C."/>
            <person name="Merai M."/>
            <person name="Meyer F."/>
            <person name="Mormann S."/>
            <person name="Munoz-Dorado J."/>
            <person name="Perez J."/>
            <person name="Pradella S."/>
            <person name="Rachid S."/>
            <person name="Raddatz G."/>
            <person name="Rosenau F."/>
            <person name="Rueckert C."/>
            <person name="Sasse F."/>
            <person name="Scharfe M."/>
            <person name="Schuster S.C."/>
            <person name="Suen G."/>
            <person name="Treuner-Lange A."/>
            <person name="Velicer G.J."/>
            <person name="Vorholter F.-J."/>
            <person name="Weissman K.J."/>
            <person name="Welch R.D."/>
            <person name="Wenzel S.C."/>
            <person name="Whitworth D.E."/>
            <person name="Wilhelm S."/>
            <person name="Wittmann C."/>
            <person name="Bloecker H."/>
            <person name="Puehler A."/>
            <person name="Mueller R."/>
        </authorList>
    </citation>
    <scope>NUCLEOTIDE SEQUENCE [LARGE SCALE GENOMIC DNA]</scope>
    <source>
        <strain>So ce56</strain>
    </source>
</reference>